<sequence>MDINITLIGQMITFAIFVGFTMKFVWPPLRKALDERREKIAEGLASADRASRELEVAKRQSAEILREAKAKATEIVENAYVRAHKVDEQAKEEAIAAADKIKSMAMAEIEQEKVKAKEELKHEVVSLAMAAASKIISANVDEQSSKKILKDFVEKV</sequence>
<feature type="chain" id="PRO_0000368487" description="ATP synthase subunit b">
    <location>
        <begin position="1"/>
        <end position="156"/>
    </location>
</feature>
<feature type="transmembrane region" description="Helical" evidence="1">
    <location>
        <begin position="5"/>
        <end position="27"/>
    </location>
</feature>
<reference key="1">
    <citation type="submission" date="2007-12" db="EMBL/GenBank/DDBJ databases">
        <title>Complete sequence of chromosome of Francisella philomiragia subsp. philomiragia ATCC 25017.</title>
        <authorList>
            <consortium name="US DOE Joint Genome Institute"/>
            <person name="Copeland A."/>
            <person name="Lucas S."/>
            <person name="Lapidus A."/>
            <person name="Barry K."/>
            <person name="Detter J.C."/>
            <person name="Glavina del Rio T."/>
            <person name="Hammon N."/>
            <person name="Israni S."/>
            <person name="Dalin E."/>
            <person name="Tice H."/>
            <person name="Pitluck S."/>
            <person name="Chain P."/>
            <person name="Malfatti S."/>
            <person name="Shin M."/>
            <person name="Vergez L."/>
            <person name="Schmutz J."/>
            <person name="Larimer F."/>
            <person name="Land M."/>
            <person name="Hauser L."/>
            <person name="Richardson P."/>
        </authorList>
    </citation>
    <scope>NUCLEOTIDE SEQUENCE [LARGE SCALE GENOMIC DNA]</scope>
    <source>
        <strain>ATCC 25017 / CCUG 19701 / FSC 153 / O#319-036</strain>
    </source>
</reference>
<name>ATPF_FRAP2</name>
<proteinExistence type="inferred from homology"/>
<comment type="function">
    <text evidence="1">F(1)F(0) ATP synthase produces ATP from ADP in the presence of a proton or sodium gradient. F-type ATPases consist of two structural domains, F(1) containing the extramembraneous catalytic core and F(0) containing the membrane proton channel, linked together by a central stalk and a peripheral stalk. During catalysis, ATP synthesis in the catalytic domain of F(1) is coupled via a rotary mechanism of the central stalk subunits to proton translocation.</text>
</comment>
<comment type="function">
    <text evidence="1">Component of the F(0) channel, it forms part of the peripheral stalk, linking F(1) to F(0).</text>
</comment>
<comment type="subunit">
    <text evidence="1">F-type ATPases have 2 components, F(1) - the catalytic core - and F(0) - the membrane proton channel. F(1) has five subunits: alpha(3), beta(3), gamma(1), delta(1), epsilon(1). F(0) has three main subunits: a(1), b(2) and c(10-14). The alpha and beta chains form an alternating ring which encloses part of the gamma chain. F(1) is attached to F(0) by a central stalk formed by the gamma and epsilon chains, while a peripheral stalk is formed by the delta and b chains.</text>
</comment>
<comment type="subcellular location">
    <subcellularLocation>
        <location evidence="1">Cell inner membrane</location>
        <topology evidence="1">Single-pass membrane protein</topology>
    </subcellularLocation>
</comment>
<comment type="similarity">
    <text evidence="1">Belongs to the ATPase B chain family.</text>
</comment>
<protein>
    <recommendedName>
        <fullName evidence="1">ATP synthase subunit b</fullName>
    </recommendedName>
    <alternativeName>
        <fullName evidence="1">ATP synthase F(0) sector subunit b</fullName>
    </alternativeName>
    <alternativeName>
        <fullName evidence="1">ATPase subunit I</fullName>
    </alternativeName>
    <alternativeName>
        <fullName evidence="1">F-type ATPase subunit b</fullName>
        <shortName evidence="1">F-ATPase subunit b</shortName>
    </alternativeName>
</protein>
<keyword id="KW-0066">ATP synthesis</keyword>
<keyword id="KW-0997">Cell inner membrane</keyword>
<keyword id="KW-1003">Cell membrane</keyword>
<keyword id="KW-0138">CF(0)</keyword>
<keyword id="KW-0375">Hydrogen ion transport</keyword>
<keyword id="KW-0406">Ion transport</keyword>
<keyword id="KW-0472">Membrane</keyword>
<keyword id="KW-0812">Transmembrane</keyword>
<keyword id="KW-1133">Transmembrane helix</keyword>
<keyword id="KW-0813">Transport</keyword>
<gene>
    <name evidence="1" type="primary">atpF</name>
    <name type="ordered locus">Fphi_0958</name>
</gene>
<evidence type="ECO:0000255" key="1">
    <source>
        <dbReference type="HAMAP-Rule" id="MF_01398"/>
    </source>
</evidence>
<dbReference type="EMBL" id="CP000937">
    <property type="protein sequence ID" value="ABZ87181.1"/>
    <property type="molecule type" value="Genomic_DNA"/>
</dbReference>
<dbReference type="SMR" id="B0TWS3"/>
<dbReference type="KEGG" id="fph:Fphi_0958"/>
<dbReference type="eggNOG" id="COG0711">
    <property type="taxonomic scope" value="Bacteria"/>
</dbReference>
<dbReference type="HOGENOM" id="CLU_079215_4_5_6"/>
<dbReference type="GO" id="GO:0005886">
    <property type="term" value="C:plasma membrane"/>
    <property type="evidence" value="ECO:0007669"/>
    <property type="project" value="UniProtKB-SubCell"/>
</dbReference>
<dbReference type="GO" id="GO:0045259">
    <property type="term" value="C:proton-transporting ATP synthase complex"/>
    <property type="evidence" value="ECO:0007669"/>
    <property type="project" value="UniProtKB-KW"/>
</dbReference>
<dbReference type="GO" id="GO:0046933">
    <property type="term" value="F:proton-transporting ATP synthase activity, rotational mechanism"/>
    <property type="evidence" value="ECO:0007669"/>
    <property type="project" value="UniProtKB-UniRule"/>
</dbReference>
<dbReference type="GO" id="GO:0046961">
    <property type="term" value="F:proton-transporting ATPase activity, rotational mechanism"/>
    <property type="evidence" value="ECO:0007669"/>
    <property type="project" value="TreeGrafter"/>
</dbReference>
<dbReference type="CDD" id="cd06503">
    <property type="entry name" value="ATP-synt_Fo_b"/>
    <property type="match status" value="1"/>
</dbReference>
<dbReference type="Gene3D" id="6.10.250.1580">
    <property type="match status" value="1"/>
</dbReference>
<dbReference type="HAMAP" id="MF_01398">
    <property type="entry name" value="ATP_synth_b_bprime"/>
    <property type="match status" value="1"/>
</dbReference>
<dbReference type="InterPro" id="IPR028987">
    <property type="entry name" value="ATP_synth_B-like_membr_sf"/>
</dbReference>
<dbReference type="InterPro" id="IPR002146">
    <property type="entry name" value="ATP_synth_b/b'su_bac/chlpt"/>
</dbReference>
<dbReference type="InterPro" id="IPR005864">
    <property type="entry name" value="ATP_synth_F0_bsu_bac"/>
</dbReference>
<dbReference type="InterPro" id="IPR050059">
    <property type="entry name" value="ATP_synthase_B_chain"/>
</dbReference>
<dbReference type="NCBIfam" id="TIGR01144">
    <property type="entry name" value="ATP_synt_b"/>
    <property type="match status" value="1"/>
</dbReference>
<dbReference type="NCBIfam" id="NF004411">
    <property type="entry name" value="PRK05759.1-2"/>
    <property type="match status" value="1"/>
</dbReference>
<dbReference type="PANTHER" id="PTHR33445:SF1">
    <property type="entry name" value="ATP SYNTHASE SUBUNIT B"/>
    <property type="match status" value="1"/>
</dbReference>
<dbReference type="PANTHER" id="PTHR33445">
    <property type="entry name" value="ATP SYNTHASE SUBUNIT B', CHLOROPLASTIC"/>
    <property type="match status" value="1"/>
</dbReference>
<dbReference type="Pfam" id="PF00430">
    <property type="entry name" value="ATP-synt_B"/>
    <property type="match status" value="1"/>
</dbReference>
<dbReference type="SUPFAM" id="SSF81573">
    <property type="entry name" value="F1F0 ATP synthase subunit B, membrane domain"/>
    <property type="match status" value="1"/>
</dbReference>
<accession>B0TWS3</accession>
<organism>
    <name type="scientific">Francisella philomiragia subsp. philomiragia (strain ATCC 25017 / CCUG 19701 / FSC 153 / O#319-036)</name>
    <dbReference type="NCBI Taxonomy" id="484022"/>
    <lineage>
        <taxon>Bacteria</taxon>
        <taxon>Pseudomonadati</taxon>
        <taxon>Pseudomonadota</taxon>
        <taxon>Gammaproteobacteria</taxon>
        <taxon>Thiotrichales</taxon>
        <taxon>Francisellaceae</taxon>
        <taxon>Francisella</taxon>
    </lineage>
</organism>